<name>HOOK_DROWI</name>
<organism>
    <name type="scientific">Drosophila willistoni</name>
    <name type="common">Fruit fly</name>
    <dbReference type="NCBI Taxonomy" id="7260"/>
    <lineage>
        <taxon>Eukaryota</taxon>
        <taxon>Metazoa</taxon>
        <taxon>Ecdysozoa</taxon>
        <taxon>Arthropoda</taxon>
        <taxon>Hexapoda</taxon>
        <taxon>Insecta</taxon>
        <taxon>Pterygota</taxon>
        <taxon>Neoptera</taxon>
        <taxon>Endopterygota</taxon>
        <taxon>Diptera</taxon>
        <taxon>Brachycera</taxon>
        <taxon>Muscomorpha</taxon>
        <taxon>Ephydroidea</taxon>
        <taxon>Drosophilidae</taxon>
        <taxon>Drosophila</taxon>
        <taxon>Sophophora</taxon>
    </lineage>
</organism>
<evidence type="ECO:0000250" key="1">
    <source>
        <dbReference type="UniProtKB" id="Q24185"/>
    </source>
</evidence>
<evidence type="ECO:0000255" key="2"/>
<evidence type="ECO:0000255" key="3">
    <source>
        <dbReference type="PROSITE-ProRule" id="PRU00044"/>
    </source>
</evidence>
<evidence type="ECO:0000256" key="4">
    <source>
        <dbReference type="SAM" id="MobiDB-lite"/>
    </source>
</evidence>
<evidence type="ECO:0000305" key="5"/>
<dbReference type="EMBL" id="CH963920">
    <property type="protein sequence ID" value="EDW78112.1"/>
    <property type="status" value="ALT_INIT"/>
    <property type="molecule type" value="Genomic_DNA"/>
</dbReference>
<dbReference type="SMR" id="B4N1C2"/>
<dbReference type="STRING" id="7260.B4N1C2"/>
<dbReference type="EnsemblMetazoa" id="FBtr0254834">
    <property type="protein sequence ID" value="FBpp0253326"/>
    <property type="gene ID" value="FBgn0226145"/>
</dbReference>
<dbReference type="EnsemblMetazoa" id="XM_002067090.4">
    <property type="protein sequence ID" value="XP_002067126.2"/>
    <property type="gene ID" value="LOC6643752"/>
</dbReference>
<dbReference type="GeneID" id="6643752"/>
<dbReference type="KEGG" id="dwi:6643752"/>
<dbReference type="CTD" id="35169"/>
<dbReference type="eggNOG" id="ENOG502QQM8">
    <property type="taxonomic scope" value="Eukaryota"/>
</dbReference>
<dbReference type="OrthoDB" id="49395at2759"/>
<dbReference type="Proteomes" id="UP000007798">
    <property type="component" value="Unassembled WGS sequence"/>
</dbReference>
<dbReference type="GO" id="GO:0005813">
    <property type="term" value="C:centrosome"/>
    <property type="evidence" value="ECO:0007669"/>
    <property type="project" value="TreeGrafter"/>
</dbReference>
<dbReference type="GO" id="GO:0005768">
    <property type="term" value="C:endosome"/>
    <property type="evidence" value="ECO:0000250"/>
    <property type="project" value="UniProtKB"/>
</dbReference>
<dbReference type="GO" id="GO:0005874">
    <property type="term" value="C:microtubule"/>
    <property type="evidence" value="ECO:0007669"/>
    <property type="project" value="UniProtKB-KW"/>
</dbReference>
<dbReference type="GO" id="GO:0045202">
    <property type="term" value="C:synapse"/>
    <property type="evidence" value="ECO:0000250"/>
    <property type="project" value="UniProtKB"/>
</dbReference>
<dbReference type="GO" id="GO:0051959">
    <property type="term" value="F:dynein light intermediate chain binding"/>
    <property type="evidence" value="ECO:0007669"/>
    <property type="project" value="TreeGrafter"/>
</dbReference>
<dbReference type="GO" id="GO:0008017">
    <property type="term" value="F:microtubule binding"/>
    <property type="evidence" value="ECO:0000250"/>
    <property type="project" value="UniProtKB"/>
</dbReference>
<dbReference type="GO" id="GO:0031267">
    <property type="term" value="F:small GTPase binding"/>
    <property type="evidence" value="ECO:0007669"/>
    <property type="project" value="EnsemblMetazoa"/>
</dbReference>
<dbReference type="GO" id="GO:0031122">
    <property type="term" value="P:cytoplasmic microtubule organization"/>
    <property type="evidence" value="ECO:0007669"/>
    <property type="project" value="InterPro"/>
</dbReference>
<dbReference type="GO" id="GO:0030705">
    <property type="term" value="P:cytoskeleton-dependent intracellular transport"/>
    <property type="evidence" value="ECO:0000250"/>
    <property type="project" value="UniProtKB"/>
</dbReference>
<dbReference type="GO" id="GO:0008340">
    <property type="term" value="P:determination of adult lifespan"/>
    <property type="evidence" value="ECO:0000250"/>
    <property type="project" value="UniProtKB"/>
</dbReference>
<dbReference type="GO" id="GO:0006897">
    <property type="term" value="P:endocytosis"/>
    <property type="evidence" value="ECO:0000250"/>
    <property type="project" value="UniProtKB"/>
</dbReference>
<dbReference type="CDD" id="cd22222">
    <property type="entry name" value="HkD_Hook"/>
    <property type="match status" value="1"/>
</dbReference>
<dbReference type="FunFam" id="1.10.418.10:FF:000024">
    <property type="entry name" value="Hook homolog 3 (Drosophila)"/>
    <property type="match status" value="1"/>
</dbReference>
<dbReference type="Gene3D" id="1.10.418.10">
    <property type="entry name" value="Calponin-like domain"/>
    <property type="match status" value="1"/>
</dbReference>
<dbReference type="InterPro" id="IPR001715">
    <property type="entry name" value="CH_dom"/>
</dbReference>
<dbReference type="InterPro" id="IPR036872">
    <property type="entry name" value="CH_dom_sf"/>
</dbReference>
<dbReference type="InterPro" id="IPR008636">
    <property type="entry name" value="Hook_C"/>
</dbReference>
<dbReference type="InterPro" id="IPR043936">
    <property type="entry name" value="HOOK_N"/>
</dbReference>
<dbReference type="PANTHER" id="PTHR18947">
    <property type="entry name" value="HOOK PROTEINS"/>
    <property type="match status" value="1"/>
</dbReference>
<dbReference type="PANTHER" id="PTHR18947:SF39">
    <property type="entry name" value="PROTEIN HOOK"/>
    <property type="match status" value="1"/>
</dbReference>
<dbReference type="Pfam" id="PF05622">
    <property type="entry name" value="HOOK"/>
    <property type="match status" value="1"/>
</dbReference>
<dbReference type="Pfam" id="PF19047">
    <property type="entry name" value="HOOK_N"/>
    <property type="match status" value="1"/>
</dbReference>
<dbReference type="SUPFAM" id="SSF116907">
    <property type="entry name" value="Hook domain"/>
    <property type="match status" value="1"/>
</dbReference>
<dbReference type="PROSITE" id="PS50021">
    <property type="entry name" value="CH"/>
    <property type="match status" value="1"/>
</dbReference>
<reference key="1">
    <citation type="journal article" date="2007" name="Nature">
        <title>Evolution of genes and genomes on the Drosophila phylogeny.</title>
        <authorList>
            <consortium name="Drosophila 12 genomes consortium"/>
        </authorList>
    </citation>
    <scope>NUCLEOTIDE SEQUENCE [LARGE SCALE GENOMIC DNA]</scope>
    <source>
        <strain>Tucson 14030-0811.24</strain>
    </source>
</reference>
<protein>
    <recommendedName>
        <fullName>Protein hook</fullName>
    </recommendedName>
</protein>
<keyword id="KW-0175">Coiled coil</keyword>
<keyword id="KW-0963">Cytoplasm</keyword>
<keyword id="KW-0206">Cytoskeleton</keyword>
<keyword id="KW-0217">Developmental protein</keyword>
<keyword id="KW-0254">Endocytosis</keyword>
<keyword id="KW-0967">Endosome</keyword>
<keyword id="KW-0493">Microtubule</keyword>
<keyword id="KW-1185">Reference proteome</keyword>
<keyword id="KW-0770">Synapse</keyword>
<sequence>MSEAKSEMYYSLLEWFKTLNLSAAHNNAEELADGLALAQALNQFAADFFTDSWLAKIKASAVGSNWRLRMSNLKKVTQSLYDYYSEVMNYTLSDFVRPDLQLIAEKCDQVELERLLQLVLGCAVNCAKKQSYITEIMGLEEELQANIMRALQELESTGLVAGERSPSSSASGGAGSGGAVNSLSRNSLSVKALQEERDAMAQKCFETEKKMLLLLDEKTNLQQELQKIQQEFARLEINTTAIGDDGVSLGPVQAGSVRFNEMRRQLDLLKEELLQSEGAREDLKLKAVQQESDLVHMQQRIDELLKSSAEVTTLKDEVDVLRESNDKLKICEAQLDTYKKKLEDYNDLKKQIKILEERSADYVQQNAQFEDDAKRYANTKGQIELFKKEIQDLHSKLDIESGKNVKLEFDNKNLESKNLALQRAKESLVKERDNLRETVDELKCGHLTNNSGLTGCVEGTTMSRELQPTAMMDKIQRLEAENKALREGQGGQTALAQLLDDANKRCEHLRDQLKSANERILSLSHASQSDDPILKENEFAKQIKQLMELNEQKTLQLEEAVTQNASYQSKVIQLETSLSSREQEILACDAKYRKCVQKAKEIIKNIDPHIANAIDASALEKNMVDVVDEESKPKMSVMEEQLMTTAFYRLGVNAQRDAVDSKLAILMGSGQTFLARQRQSAPRKSLSAMKSK</sequence>
<accession>B4N1C2</accession>
<gene>
    <name evidence="1" type="primary">hook</name>
    <name evidence="1" type="synonym">hk</name>
    <name type="ORF">GK24183</name>
</gene>
<proteinExistence type="inferred from homology"/>
<feature type="chain" id="PRO_0000379070" description="Protein hook">
    <location>
        <begin position="1"/>
        <end position="692"/>
    </location>
</feature>
<feature type="domain" description="Calponin-homology (CH)" evidence="3">
    <location>
        <begin position="6"/>
        <end position="123"/>
    </location>
</feature>
<feature type="region of interest" description="Disordered" evidence="4">
    <location>
        <begin position="161"/>
        <end position="180"/>
    </location>
</feature>
<feature type="coiled-coil region" evidence="2">
    <location>
        <begin position="135"/>
        <end position="576"/>
    </location>
</feature>
<comment type="function">
    <text evidence="1">Involved in endocytic trafficking by stabilizing organelles of the endocytic pathway. Probably acts as a cytoskeletal linker protein required to tether endosome vesicles to the cytoskeleton. Involved in modulation of endocytosis at stages required for down-regulation of membrane proteins that control synapse size. Not involved in synaptic vesicle recycling. Required in R7 cells for boss endocytosis into multivesicular bodies (MVBs). Has a role in regulating adult longevity.</text>
</comment>
<comment type="subunit">
    <text evidence="1">Homodimer. Interacts with microtubules via its N-terminus.</text>
</comment>
<comment type="subcellular location">
    <subcellularLocation>
        <location evidence="1">Cytoplasm</location>
        <location evidence="1">Cytoskeleton</location>
    </subcellularLocation>
    <subcellularLocation>
        <location evidence="1">Endosome</location>
    </subcellularLocation>
    <subcellularLocation>
        <location evidence="1">Synapse</location>
    </subcellularLocation>
    <text evidence="1">Enriched at neuromuscular synapses, in both presynaptic and postsynaptic regions.</text>
</comment>
<comment type="domain">
    <text evidence="1">The coiled coil domain mediates homodimerization.</text>
</comment>
<comment type="similarity">
    <text evidence="5">Belongs to the hook family.</text>
</comment>
<comment type="sequence caution" evidence="5">
    <conflict type="erroneous initiation">
        <sequence resource="EMBL-CDS" id="EDW78112"/>
    </conflict>
</comment>